<feature type="chain" id="PRO_0000202038" description="DNA recombination protein RmuC">
    <location>
        <begin position="1"/>
        <end position="476"/>
    </location>
</feature>
<feature type="region of interest" description="Disordered" evidence="3">
    <location>
        <begin position="447"/>
        <end position="476"/>
    </location>
</feature>
<feature type="coiled-coil region" evidence="2">
    <location>
        <begin position="25"/>
        <end position="202"/>
    </location>
</feature>
<feature type="compositionally biased region" description="Basic and acidic residues" evidence="3">
    <location>
        <begin position="449"/>
        <end position="476"/>
    </location>
</feature>
<name>RMUC_SALTI</name>
<accession>P0A2B8</accession>
<accession>Q9L6M7</accession>
<comment type="function">
    <text evidence="1">Involved in DNA recombination.</text>
</comment>
<comment type="similarity">
    <text evidence="4">Belongs to the RmuC family.</text>
</comment>
<sequence>MDITLMISAVVALAAGAVIGWLATKAHADQIRADLIEERRELDIELSAARQQLAQEAHWRSECELLNNELRSLHSINTSLEADLREVTTRLEATQQHAEDKIRQMINSEQRLSEQFENLANRIFEHSNRRVDEQNRQSLNSLLTPLREQLDGFRRQVQESFGKEAQERHTLAHEIRNLQQLNAQMAQEAINLTRALKGDNKAQGNWGEVVLARVLEASGLREGYEYETQVSIENDARSRMQPDVIVRLPQGKDVVIDAKMTLVAYERYFNAEDDYTREAALQEHIASVRNHIRLLGRKDYQQLPGLRSLDYVLMFIPVEPAFLLALDKQPELITEALKNNIMLVSPTTLLVALRTIANLWRYEHQSRNAQHIADRASKLYDKMRLFVDDMSAIGQSLDKAQDNYRQAMKKLASGRGNVLAQAEAFRGLGVEIKREINPDLAEQAVTQDEEYRLRSIPEGRQDEHYPNDERVKQQLS</sequence>
<protein>
    <recommendedName>
        <fullName>DNA recombination protein RmuC</fullName>
    </recommendedName>
</protein>
<organism>
    <name type="scientific">Salmonella typhi</name>
    <dbReference type="NCBI Taxonomy" id="90370"/>
    <lineage>
        <taxon>Bacteria</taxon>
        <taxon>Pseudomonadati</taxon>
        <taxon>Pseudomonadota</taxon>
        <taxon>Gammaproteobacteria</taxon>
        <taxon>Enterobacterales</taxon>
        <taxon>Enterobacteriaceae</taxon>
        <taxon>Salmonella</taxon>
    </lineage>
</organism>
<proteinExistence type="inferred from homology"/>
<dbReference type="EMBL" id="AL513382">
    <property type="protein sequence ID" value="CAD07923.1"/>
    <property type="molecule type" value="Genomic_DNA"/>
</dbReference>
<dbReference type="EMBL" id="AE014613">
    <property type="protein sequence ID" value="AAO70856.1"/>
    <property type="molecule type" value="Genomic_DNA"/>
</dbReference>
<dbReference type="RefSeq" id="NP_457782.1">
    <property type="nucleotide sequence ID" value="NC_003198.1"/>
</dbReference>
<dbReference type="RefSeq" id="WP_000355562.1">
    <property type="nucleotide sequence ID" value="NZ_WSUR01000033.1"/>
</dbReference>
<dbReference type="SMR" id="P0A2B8"/>
<dbReference type="STRING" id="220341.gene:17587442"/>
<dbReference type="KEGG" id="stt:t3328"/>
<dbReference type="KEGG" id="sty:STY3590"/>
<dbReference type="PATRIC" id="fig|220341.7.peg.3657"/>
<dbReference type="eggNOG" id="COG1322">
    <property type="taxonomic scope" value="Bacteria"/>
</dbReference>
<dbReference type="HOGENOM" id="CLU_024057_0_1_6"/>
<dbReference type="OMA" id="GDSKMQG"/>
<dbReference type="OrthoDB" id="9765111at2"/>
<dbReference type="Proteomes" id="UP000000541">
    <property type="component" value="Chromosome"/>
</dbReference>
<dbReference type="Proteomes" id="UP000002670">
    <property type="component" value="Chromosome"/>
</dbReference>
<dbReference type="GO" id="GO:0006310">
    <property type="term" value="P:DNA recombination"/>
    <property type="evidence" value="ECO:0007669"/>
    <property type="project" value="UniProtKB-KW"/>
</dbReference>
<dbReference type="InterPro" id="IPR003798">
    <property type="entry name" value="DNA_recombination_RmuC"/>
</dbReference>
<dbReference type="NCBIfam" id="NF007686">
    <property type="entry name" value="PRK10361.1"/>
    <property type="match status" value="1"/>
</dbReference>
<dbReference type="PANTHER" id="PTHR30563">
    <property type="entry name" value="DNA RECOMBINATION PROTEIN RMUC"/>
    <property type="match status" value="1"/>
</dbReference>
<dbReference type="PANTHER" id="PTHR30563:SF0">
    <property type="entry name" value="DNA RECOMBINATION PROTEIN RMUC"/>
    <property type="match status" value="1"/>
</dbReference>
<dbReference type="Pfam" id="PF02646">
    <property type="entry name" value="RmuC"/>
    <property type="match status" value="1"/>
</dbReference>
<keyword id="KW-0175">Coiled coil</keyword>
<keyword id="KW-0233">DNA recombination</keyword>
<evidence type="ECO:0000250" key="1"/>
<evidence type="ECO:0000255" key="2"/>
<evidence type="ECO:0000256" key="3">
    <source>
        <dbReference type="SAM" id="MobiDB-lite"/>
    </source>
</evidence>
<evidence type="ECO:0000305" key="4"/>
<gene>
    <name type="primary">rmuC</name>
    <name type="ordered locus">STY3590</name>
    <name type="ordered locus">t3328</name>
</gene>
<reference key="1">
    <citation type="journal article" date="2001" name="Nature">
        <title>Complete genome sequence of a multiple drug resistant Salmonella enterica serovar Typhi CT18.</title>
        <authorList>
            <person name="Parkhill J."/>
            <person name="Dougan G."/>
            <person name="James K.D."/>
            <person name="Thomson N.R."/>
            <person name="Pickard D."/>
            <person name="Wain J."/>
            <person name="Churcher C.M."/>
            <person name="Mungall K.L."/>
            <person name="Bentley S.D."/>
            <person name="Holden M.T.G."/>
            <person name="Sebaihia M."/>
            <person name="Baker S."/>
            <person name="Basham D."/>
            <person name="Brooks K."/>
            <person name="Chillingworth T."/>
            <person name="Connerton P."/>
            <person name="Cronin A."/>
            <person name="Davis P."/>
            <person name="Davies R.M."/>
            <person name="Dowd L."/>
            <person name="White N."/>
            <person name="Farrar J."/>
            <person name="Feltwell T."/>
            <person name="Hamlin N."/>
            <person name="Haque A."/>
            <person name="Hien T.T."/>
            <person name="Holroyd S."/>
            <person name="Jagels K."/>
            <person name="Krogh A."/>
            <person name="Larsen T.S."/>
            <person name="Leather S."/>
            <person name="Moule S."/>
            <person name="O'Gaora P."/>
            <person name="Parry C."/>
            <person name="Quail M.A."/>
            <person name="Rutherford K.M."/>
            <person name="Simmonds M."/>
            <person name="Skelton J."/>
            <person name="Stevens K."/>
            <person name="Whitehead S."/>
            <person name="Barrell B.G."/>
        </authorList>
    </citation>
    <scope>NUCLEOTIDE SEQUENCE [LARGE SCALE GENOMIC DNA]</scope>
    <source>
        <strain>CT18</strain>
    </source>
</reference>
<reference key="2">
    <citation type="journal article" date="2003" name="J. Bacteriol.">
        <title>Comparative genomics of Salmonella enterica serovar Typhi strains Ty2 and CT18.</title>
        <authorList>
            <person name="Deng W."/>
            <person name="Liou S.-R."/>
            <person name="Plunkett G. III"/>
            <person name="Mayhew G.F."/>
            <person name="Rose D.J."/>
            <person name="Burland V."/>
            <person name="Kodoyianni V."/>
            <person name="Schwartz D.C."/>
            <person name="Blattner F.R."/>
        </authorList>
    </citation>
    <scope>NUCLEOTIDE SEQUENCE [LARGE SCALE GENOMIC DNA]</scope>
    <source>
        <strain>ATCC 700931 / Ty2</strain>
    </source>
</reference>